<proteinExistence type="evidence at protein level"/>
<keyword id="KW-0002">3D-structure</keyword>
<keyword id="KW-1185">Reference proteome</keyword>
<keyword id="KW-0687">Ribonucleoprotein</keyword>
<keyword id="KW-0689">Ribosomal protein</keyword>
<feature type="chain" id="PRO_0000146657" description="Small ribosomal subunit protein uS10">
    <location>
        <begin position="1"/>
        <end position="102"/>
    </location>
</feature>
<evidence type="ECO:0000255" key="1">
    <source>
        <dbReference type="HAMAP-Rule" id="MF_00508"/>
    </source>
</evidence>
<evidence type="ECO:0000269" key="2">
    <source>
    </source>
</evidence>
<evidence type="ECO:0000305" key="3"/>
<evidence type="ECO:0007744" key="4">
    <source>
        <dbReference type="PDB" id="6SKF"/>
    </source>
</evidence>
<evidence type="ECO:0007744" key="5">
    <source>
        <dbReference type="PDB" id="6SKG"/>
    </source>
</evidence>
<evidence type="ECO:0007744" key="6">
    <source>
        <dbReference type="PDB" id="6TH6"/>
    </source>
</evidence>
<comment type="function">
    <text evidence="1">Involved in the binding of tRNA to the ribosomes.</text>
</comment>
<comment type="subunit">
    <text evidence="1 2">Part of the 30S ribosomal subunit.</text>
</comment>
<comment type="similarity">
    <text evidence="1">Belongs to the universal ribosomal protein uS10 family.</text>
</comment>
<organism>
    <name type="scientific">Thermococcus kodakarensis (strain ATCC BAA-918 / JCM 12380 / KOD1)</name>
    <name type="common">Pyrococcus kodakaraensis (strain KOD1)</name>
    <dbReference type="NCBI Taxonomy" id="69014"/>
    <lineage>
        <taxon>Archaea</taxon>
        <taxon>Methanobacteriati</taxon>
        <taxon>Methanobacteriota</taxon>
        <taxon>Thermococci</taxon>
        <taxon>Thermococcales</taxon>
        <taxon>Thermococcaceae</taxon>
        <taxon>Thermococcus</taxon>
    </lineage>
</organism>
<gene>
    <name evidence="1" type="primary">rps10</name>
    <name type="ordered locus">TK0307</name>
</gene>
<accession>Q5JFZ5</accession>
<reference key="1">
    <citation type="journal article" date="2005" name="Genome Res.">
        <title>Complete genome sequence of the hyperthermophilic archaeon Thermococcus kodakaraensis KOD1 and comparison with Pyrococcus genomes.</title>
        <authorList>
            <person name="Fukui T."/>
            <person name="Atomi H."/>
            <person name="Kanai T."/>
            <person name="Matsumi R."/>
            <person name="Fujiwara S."/>
            <person name="Imanaka T."/>
        </authorList>
    </citation>
    <scope>NUCLEOTIDE SEQUENCE [LARGE SCALE GENOMIC DNA]</scope>
    <source>
        <strain>ATCC BAA-918 / JCM 12380 / KOD1</strain>
    </source>
</reference>
<reference evidence="4 5 6" key="2">
    <citation type="journal article" date="2020" name="Nature">
        <title>Dynamic RNA acetylation revealed by quantitative cross-evolutionary mapping.</title>
        <authorList>
            <person name="Sas-Chen A."/>
            <person name="Thomas J.M."/>
            <person name="Matzov D."/>
            <person name="Taoka M."/>
            <person name="Nance K.D."/>
            <person name="Nir R."/>
            <person name="Bryson K.M."/>
            <person name="Shachar R."/>
            <person name="Liman G.L.S."/>
            <person name="Burkhart B.W."/>
            <person name="Gamage S.T."/>
            <person name="Nobe Y."/>
            <person name="Briney C.A."/>
            <person name="Levy M.J."/>
            <person name="Fuchs R.T."/>
            <person name="Robb G.B."/>
            <person name="Hartmann J."/>
            <person name="Sharma S."/>
            <person name="Lin Q."/>
            <person name="Florens L."/>
            <person name="Washburn M.P."/>
            <person name="Isobe T."/>
            <person name="Santangelo T.J."/>
            <person name="Shalev-Benami M."/>
            <person name="Meier J.L."/>
            <person name="Schwartz S."/>
        </authorList>
    </citation>
    <scope>STRUCTURE BY ELECTRON MICROSCOPY (2.55 ANGSTROMS) IN 70S RIBOSOME</scope>
    <scope>SUBUNIT</scope>
    <source>
        <strain>ATCC BAA-918 / TS559</strain>
    </source>
</reference>
<protein>
    <recommendedName>
        <fullName evidence="1">Small ribosomal subunit protein uS10</fullName>
    </recommendedName>
    <alternativeName>
        <fullName evidence="3">30S ribosomal protein S10</fullName>
    </alternativeName>
</protein>
<sequence length="102" mass="11696">MQKARIKLASTNIKALNEVTDQIKQIAERTGVRMSGPIPLPTKRIRITTRKSPDGEGSATFDRFELRVHKRLVDIEADERAMRQIMRIRVPEDVTIEIELIS</sequence>
<dbReference type="EMBL" id="AP006878">
    <property type="protein sequence ID" value="BAD84496.1"/>
    <property type="molecule type" value="Genomic_DNA"/>
</dbReference>
<dbReference type="RefSeq" id="WP_011249262.1">
    <property type="nucleotide sequence ID" value="NC_006624.1"/>
</dbReference>
<dbReference type="PDB" id="6SKF">
    <property type="method" value="EM"/>
    <property type="resolution" value="2.95 A"/>
    <property type="chains" value="Am=1-102"/>
</dbReference>
<dbReference type="PDB" id="6SKG">
    <property type="method" value="EM"/>
    <property type="resolution" value="2.65 A"/>
    <property type="chains" value="Am=1-102"/>
</dbReference>
<dbReference type="PDB" id="6TH6">
    <property type="method" value="EM"/>
    <property type="resolution" value="2.55 A"/>
    <property type="chains" value="Am=1-102"/>
</dbReference>
<dbReference type="PDBsum" id="6SKF"/>
<dbReference type="PDBsum" id="6SKG"/>
<dbReference type="PDBsum" id="6TH6"/>
<dbReference type="EMDB" id="EMD-10223"/>
<dbReference type="EMDB" id="EMD-10224"/>
<dbReference type="EMDB" id="EMD-10503"/>
<dbReference type="SMR" id="Q5JFZ5"/>
<dbReference type="FunCoup" id="Q5JFZ5">
    <property type="interactions" value="144"/>
</dbReference>
<dbReference type="IntAct" id="Q5JFZ5">
    <property type="interactions" value="1"/>
</dbReference>
<dbReference type="MINT" id="Q5JFZ5"/>
<dbReference type="STRING" id="69014.TK0307"/>
<dbReference type="EnsemblBacteria" id="BAD84496">
    <property type="protein sequence ID" value="BAD84496"/>
    <property type="gene ID" value="TK0307"/>
</dbReference>
<dbReference type="GeneID" id="78446812"/>
<dbReference type="KEGG" id="tko:TK0307"/>
<dbReference type="PATRIC" id="fig|69014.16.peg.306"/>
<dbReference type="eggNOG" id="arCOG01758">
    <property type="taxonomic scope" value="Archaea"/>
</dbReference>
<dbReference type="HOGENOM" id="CLU_122625_0_1_2"/>
<dbReference type="InParanoid" id="Q5JFZ5"/>
<dbReference type="OrthoDB" id="371736at2157"/>
<dbReference type="PhylomeDB" id="Q5JFZ5"/>
<dbReference type="Proteomes" id="UP000000536">
    <property type="component" value="Chromosome"/>
</dbReference>
<dbReference type="GO" id="GO:0022627">
    <property type="term" value="C:cytosolic small ribosomal subunit"/>
    <property type="evidence" value="ECO:0000318"/>
    <property type="project" value="GO_Central"/>
</dbReference>
<dbReference type="GO" id="GO:0003735">
    <property type="term" value="F:structural constituent of ribosome"/>
    <property type="evidence" value="ECO:0000318"/>
    <property type="project" value="GO_Central"/>
</dbReference>
<dbReference type="GO" id="GO:0000049">
    <property type="term" value="F:tRNA binding"/>
    <property type="evidence" value="ECO:0007669"/>
    <property type="project" value="UniProtKB-UniRule"/>
</dbReference>
<dbReference type="GO" id="GO:0006412">
    <property type="term" value="P:translation"/>
    <property type="evidence" value="ECO:0007669"/>
    <property type="project" value="UniProtKB-UniRule"/>
</dbReference>
<dbReference type="FunFam" id="3.30.70.600:FF:000004">
    <property type="entry name" value="30S ribosomal protein S10"/>
    <property type="match status" value="1"/>
</dbReference>
<dbReference type="Gene3D" id="3.30.70.600">
    <property type="entry name" value="Ribosomal protein S10 domain"/>
    <property type="match status" value="1"/>
</dbReference>
<dbReference type="HAMAP" id="MF_00508">
    <property type="entry name" value="Ribosomal_uS10"/>
    <property type="match status" value="1"/>
</dbReference>
<dbReference type="InterPro" id="IPR001848">
    <property type="entry name" value="Ribosomal_uS10"/>
</dbReference>
<dbReference type="InterPro" id="IPR018268">
    <property type="entry name" value="Ribosomal_uS10_CS"/>
</dbReference>
<dbReference type="InterPro" id="IPR027486">
    <property type="entry name" value="Ribosomal_uS10_dom"/>
</dbReference>
<dbReference type="InterPro" id="IPR036838">
    <property type="entry name" value="Ribosomal_uS10_dom_sf"/>
</dbReference>
<dbReference type="InterPro" id="IPR005729">
    <property type="entry name" value="Ribosomal_uS10_euk/arc"/>
</dbReference>
<dbReference type="NCBIfam" id="TIGR01046">
    <property type="entry name" value="uS10_euk_arch"/>
    <property type="match status" value="1"/>
</dbReference>
<dbReference type="PANTHER" id="PTHR11700">
    <property type="entry name" value="30S RIBOSOMAL PROTEIN S10 FAMILY MEMBER"/>
    <property type="match status" value="1"/>
</dbReference>
<dbReference type="Pfam" id="PF00338">
    <property type="entry name" value="Ribosomal_S10"/>
    <property type="match status" value="1"/>
</dbReference>
<dbReference type="PRINTS" id="PR00971">
    <property type="entry name" value="RIBOSOMALS10"/>
</dbReference>
<dbReference type="SMART" id="SM01403">
    <property type="entry name" value="Ribosomal_S10"/>
    <property type="match status" value="1"/>
</dbReference>
<dbReference type="SUPFAM" id="SSF54999">
    <property type="entry name" value="Ribosomal protein S10"/>
    <property type="match status" value="1"/>
</dbReference>
<dbReference type="PROSITE" id="PS00361">
    <property type="entry name" value="RIBOSOMAL_S10"/>
    <property type="match status" value="1"/>
</dbReference>
<name>RS10_THEKO</name>